<reference key="1">
    <citation type="submission" date="1999-02" db="EMBL/GenBank/DDBJ databases">
        <title>DnaK-like protein of Mycoplasma hominis.</title>
        <authorList>
            <person name="Henrich B."/>
            <person name="Bernhardt A."/>
        </authorList>
    </citation>
    <scope>NUCLEOTIDE SEQUENCE [GENOMIC DNA]</scope>
    <source>
        <strain>FBG</strain>
    </source>
</reference>
<name>DNAK_METHO</name>
<accession>Q9ZEJ0</accession>
<comment type="function">
    <text evidence="1">Acts as a chaperone.</text>
</comment>
<comment type="induction">
    <text evidence="1">By stress conditions e.g. heat shock (By similarity).</text>
</comment>
<comment type="similarity">
    <text evidence="3">Belongs to the heat shock protein 70 family.</text>
</comment>
<protein>
    <recommendedName>
        <fullName>Chaperone protein DnaK</fullName>
    </recommendedName>
    <alternativeName>
        <fullName>HSP70</fullName>
    </alternativeName>
    <alternativeName>
        <fullName>Heat shock 70 kDa protein</fullName>
    </alternativeName>
    <alternativeName>
        <fullName>Heat shock protein 70</fullName>
    </alternativeName>
</protein>
<organism>
    <name type="scientific">Metamycoplasma hominis</name>
    <name type="common">Mycoplasma hominis</name>
    <dbReference type="NCBI Taxonomy" id="2098"/>
    <lineage>
        <taxon>Bacteria</taxon>
        <taxon>Bacillati</taxon>
        <taxon>Mycoplasmatota</taxon>
        <taxon>Mycoplasmoidales</taxon>
        <taxon>Metamycoplasmataceae</taxon>
        <taxon>Metamycoplasma</taxon>
    </lineage>
</organism>
<gene>
    <name type="primary">dnaK</name>
</gene>
<keyword id="KW-0067">ATP-binding</keyword>
<keyword id="KW-0143">Chaperone</keyword>
<keyword id="KW-0547">Nucleotide-binding</keyword>
<keyword id="KW-0597">Phosphoprotein</keyword>
<keyword id="KW-0346">Stress response</keyword>
<sequence length="595" mass="65623">MAKEFILGIDLGTTNSVVSVIENGTPKILENPNGKRTTPSVVAFKNGETIIGESAKRQLESNKDSVASIKRLMGTSQTVHLNNKDYKPEEISAMILSYMKDYADKKLGQPVKKAVITVPAYFDNAQREATKNAGIIAGLDVVRIINEPTAAALAFGLNKDKNENQKILVFDLGGGTFDVSLLEMESGTFEVLATAGDNHLGGDDWDHEIVKWMVEQIKSKYNFDPTTDKMAMARLKEEAERAKITLSEQLIANISLPFLAMNENGPVNVELEITRATFESMTEHLLQRTRKPLLDVLSEAKLTWNDINEVLLVGGSTRMPAVQKLVAEVTNKKPNNSINPDEVVSVGAAIQGAILAGEIQDVLLLDVTPLTLGIVVEGDVVAPLIPRNTTIPVTKSQIFSTAVDNQTAVTIVITQGERQLARDNKILGQFNLEGIEPAPRGIPQIEVSFSIDVNGITKVTAKDKKTNKEQTITIQNTSSLSKEEVEKMVKDAEANREADQKKRHEIEVIVKAEQLSNDLEKTLKSEQAKNLGEPQKQELQKEIDEIKELINKKDIEQLEKKITEFEQKMAQAAEFLKKQQGNNNPNTNNDNPQTN</sequence>
<dbReference type="EMBL" id="AJ132792">
    <property type="protein sequence ID" value="CAA10785.1"/>
    <property type="molecule type" value="Genomic_DNA"/>
</dbReference>
<dbReference type="RefSeq" id="WP_020002506.1">
    <property type="nucleotide sequence ID" value="NZ_QOKO01000016.1"/>
</dbReference>
<dbReference type="SMR" id="Q9ZEJ0"/>
<dbReference type="GeneID" id="89679467"/>
<dbReference type="PATRIC" id="fig|2098.16.peg.539"/>
<dbReference type="GO" id="GO:0005524">
    <property type="term" value="F:ATP binding"/>
    <property type="evidence" value="ECO:0007669"/>
    <property type="project" value="UniProtKB-UniRule"/>
</dbReference>
<dbReference type="GO" id="GO:0140662">
    <property type="term" value="F:ATP-dependent protein folding chaperone"/>
    <property type="evidence" value="ECO:0007669"/>
    <property type="project" value="InterPro"/>
</dbReference>
<dbReference type="GO" id="GO:0051082">
    <property type="term" value="F:unfolded protein binding"/>
    <property type="evidence" value="ECO:0007669"/>
    <property type="project" value="InterPro"/>
</dbReference>
<dbReference type="CDD" id="cd10234">
    <property type="entry name" value="ASKHA_NBD_HSP70_DnaK-like"/>
    <property type="match status" value="1"/>
</dbReference>
<dbReference type="FunFam" id="2.60.34.10:FF:000014">
    <property type="entry name" value="Chaperone protein DnaK HSP70"/>
    <property type="match status" value="1"/>
</dbReference>
<dbReference type="FunFam" id="3.30.420.40:FF:000071">
    <property type="entry name" value="Molecular chaperone DnaK"/>
    <property type="match status" value="1"/>
</dbReference>
<dbReference type="FunFam" id="3.90.640.10:FF:000003">
    <property type="entry name" value="Molecular chaperone DnaK"/>
    <property type="match status" value="1"/>
</dbReference>
<dbReference type="Gene3D" id="1.20.1270.10">
    <property type="match status" value="1"/>
</dbReference>
<dbReference type="Gene3D" id="3.30.420.40">
    <property type="match status" value="2"/>
</dbReference>
<dbReference type="Gene3D" id="3.90.640.10">
    <property type="entry name" value="Actin, Chain A, domain 4"/>
    <property type="match status" value="1"/>
</dbReference>
<dbReference type="Gene3D" id="2.60.34.10">
    <property type="entry name" value="Substrate Binding Domain Of DNAk, Chain A, domain 1"/>
    <property type="match status" value="1"/>
</dbReference>
<dbReference type="HAMAP" id="MF_00332">
    <property type="entry name" value="DnaK"/>
    <property type="match status" value="1"/>
</dbReference>
<dbReference type="InterPro" id="IPR043129">
    <property type="entry name" value="ATPase_NBD"/>
</dbReference>
<dbReference type="InterPro" id="IPR012725">
    <property type="entry name" value="Chaperone_DnaK"/>
</dbReference>
<dbReference type="InterPro" id="IPR018181">
    <property type="entry name" value="Heat_shock_70_CS"/>
</dbReference>
<dbReference type="InterPro" id="IPR029048">
    <property type="entry name" value="HSP70_C_sf"/>
</dbReference>
<dbReference type="InterPro" id="IPR029047">
    <property type="entry name" value="HSP70_peptide-bd_sf"/>
</dbReference>
<dbReference type="InterPro" id="IPR013126">
    <property type="entry name" value="Hsp_70_fam"/>
</dbReference>
<dbReference type="NCBIfam" id="NF001413">
    <property type="entry name" value="PRK00290.1"/>
    <property type="match status" value="1"/>
</dbReference>
<dbReference type="PANTHER" id="PTHR19375">
    <property type="entry name" value="HEAT SHOCK PROTEIN 70KDA"/>
    <property type="match status" value="1"/>
</dbReference>
<dbReference type="Pfam" id="PF00012">
    <property type="entry name" value="HSP70"/>
    <property type="match status" value="1"/>
</dbReference>
<dbReference type="PRINTS" id="PR00301">
    <property type="entry name" value="HEATSHOCK70"/>
</dbReference>
<dbReference type="SUPFAM" id="SSF53067">
    <property type="entry name" value="Actin-like ATPase domain"/>
    <property type="match status" value="2"/>
</dbReference>
<dbReference type="SUPFAM" id="SSF100934">
    <property type="entry name" value="Heat shock protein 70kD (HSP70), C-terminal subdomain"/>
    <property type="match status" value="1"/>
</dbReference>
<dbReference type="SUPFAM" id="SSF100920">
    <property type="entry name" value="Heat shock protein 70kD (HSP70), peptide-binding domain"/>
    <property type="match status" value="1"/>
</dbReference>
<dbReference type="PROSITE" id="PS00297">
    <property type="entry name" value="HSP70_1"/>
    <property type="match status" value="1"/>
</dbReference>
<dbReference type="PROSITE" id="PS00329">
    <property type="entry name" value="HSP70_2"/>
    <property type="match status" value="1"/>
</dbReference>
<dbReference type="PROSITE" id="PS01036">
    <property type="entry name" value="HSP70_3"/>
    <property type="match status" value="1"/>
</dbReference>
<proteinExistence type="inferred from homology"/>
<feature type="chain" id="PRO_0000078491" description="Chaperone protein DnaK">
    <location>
        <begin position="1"/>
        <end position="595"/>
    </location>
</feature>
<feature type="region of interest" description="Disordered" evidence="2">
    <location>
        <begin position="573"/>
        <end position="595"/>
    </location>
</feature>
<feature type="compositionally biased region" description="Low complexity" evidence="2">
    <location>
        <begin position="582"/>
        <end position="595"/>
    </location>
</feature>
<feature type="modified residue" description="Phosphothreonine; by autocatalysis" evidence="1">
    <location>
        <position position="176"/>
    </location>
</feature>
<evidence type="ECO:0000250" key="1"/>
<evidence type="ECO:0000256" key="2">
    <source>
        <dbReference type="SAM" id="MobiDB-lite"/>
    </source>
</evidence>
<evidence type="ECO:0000305" key="3"/>